<dbReference type="EC" id="2.7.1.-" evidence="1"/>
<dbReference type="EMBL" id="AE009951">
    <property type="protein sequence ID" value="AAL95298.1"/>
    <property type="molecule type" value="Genomic_DNA"/>
</dbReference>
<dbReference type="RefSeq" id="NP_603999.1">
    <property type="nucleotide sequence ID" value="NC_003454.1"/>
</dbReference>
<dbReference type="RefSeq" id="WP_011016900.1">
    <property type="nucleotide sequence ID" value="NZ_OZ209243.1"/>
</dbReference>
<dbReference type="SMR" id="Q8R5N7"/>
<dbReference type="STRING" id="190304.FN1102"/>
<dbReference type="PaxDb" id="190304-FN1102"/>
<dbReference type="EnsemblBacteria" id="AAL95298">
    <property type="protein sequence ID" value="AAL95298"/>
    <property type="gene ID" value="FN1102"/>
</dbReference>
<dbReference type="KEGG" id="fnu:FN1102"/>
<dbReference type="PATRIC" id="fig|190304.8.peg.1667"/>
<dbReference type="eggNOG" id="COG1859">
    <property type="taxonomic scope" value="Bacteria"/>
</dbReference>
<dbReference type="HOGENOM" id="CLU_052998_4_0_0"/>
<dbReference type="InParanoid" id="Q8R5N7"/>
<dbReference type="BioCyc" id="FNUC190304:G1FZS-1682-MONOMER"/>
<dbReference type="BRENDA" id="2.7.1.160">
    <property type="organism ID" value="11865"/>
</dbReference>
<dbReference type="Proteomes" id="UP000002521">
    <property type="component" value="Chromosome"/>
</dbReference>
<dbReference type="GO" id="GO:0003950">
    <property type="term" value="F:NAD+ poly-ADP-ribosyltransferase activity"/>
    <property type="evidence" value="ECO:0007669"/>
    <property type="project" value="InterPro"/>
</dbReference>
<dbReference type="GO" id="GO:0000215">
    <property type="term" value="F:tRNA 2'-phosphotransferase activity"/>
    <property type="evidence" value="ECO:0000318"/>
    <property type="project" value="GO_Central"/>
</dbReference>
<dbReference type="GO" id="GO:0008033">
    <property type="term" value="P:tRNA processing"/>
    <property type="evidence" value="ECO:0000318"/>
    <property type="project" value="GO_Central"/>
</dbReference>
<dbReference type="GO" id="GO:0006388">
    <property type="term" value="P:tRNA splicing, via endonucleolytic cleavage and ligation"/>
    <property type="evidence" value="ECO:0007669"/>
    <property type="project" value="UniProtKB-UniRule"/>
</dbReference>
<dbReference type="Gene3D" id="3.20.170.30">
    <property type="match status" value="1"/>
</dbReference>
<dbReference type="Gene3D" id="1.10.10.970">
    <property type="entry name" value="RNA 2'-phosphotransferase, Tpt1/KptA family, N-terminal domain"/>
    <property type="match status" value="1"/>
</dbReference>
<dbReference type="HAMAP" id="MF_00299">
    <property type="entry name" value="KptA"/>
    <property type="match status" value="1"/>
</dbReference>
<dbReference type="InterPro" id="IPR002745">
    <property type="entry name" value="Ptrans_KptA/Tpt1"/>
</dbReference>
<dbReference type="InterPro" id="IPR042081">
    <property type="entry name" value="RNA_2'-PTrans_C"/>
</dbReference>
<dbReference type="InterPro" id="IPR022928">
    <property type="entry name" value="RNA_2'-PTrans_KptA"/>
</dbReference>
<dbReference type="InterPro" id="IPR042080">
    <property type="entry name" value="RNA_2'-PTrans_N"/>
</dbReference>
<dbReference type="NCBIfam" id="NF002014">
    <property type="entry name" value="PRK00819.1-4"/>
    <property type="match status" value="1"/>
</dbReference>
<dbReference type="PANTHER" id="PTHR12684">
    <property type="entry name" value="PUTATIVE PHOSPHOTRANSFERASE"/>
    <property type="match status" value="1"/>
</dbReference>
<dbReference type="PANTHER" id="PTHR12684:SF2">
    <property type="entry name" value="TRNA 2'-PHOSPHOTRANSFERASE 1"/>
    <property type="match status" value="1"/>
</dbReference>
<dbReference type="Pfam" id="PF01885">
    <property type="entry name" value="PTS_2-RNA"/>
    <property type="match status" value="1"/>
</dbReference>
<dbReference type="SUPFAM" id="SSF56399">
    <property type="entry name" value="ADP-ribosylation"/>
    <property type="match status" value="1"/>
</dbReference>
<feature type="chain" id="PRO_0000157480" description="Probable RNA 2'-phosphotransferase">
    <location>
        <begin position="1"/>
        <end position="179"/>
    </location>
</feature>
<comment type="function">
    <text evidence="1">Removes the 2'-phosphate from RNA via an intermediate in which the phosphate is ADP-ribosylated by NAD followed by a presumed transesterification to release the RNA and generate ADP-ribose 1''-2''-cyclic phosphate (APPR&gt;P). May function as an ADP-ribosylase.</text>
</comment>
<comment type="similarity">
    <text evidence="1">Belongs to the KptA/TPT1 family.</text>
</comment>
<protein>
    <recommendedName>
        <fullName evidence="1">Probable RNA 2'-phosphotransferase</fullName>
        <ecNumber evidence="1">2.7.1.-</ecNumber>
    </recommendedName>
</protein>
<gene>
    <name evidence="1" type="primary">kptA</name>
    <name type="ordered locus">FN1102</name>
</gene>
<name>KPTA_FUSNN</name>
<accession>Q8R5N7</accession>
<evidence type="ECO:0000255" key="1">
    <source>
        <dbReference type="HAMAP-Rule" id="MF_00299"/>
    </source>
</evidence>
<reference key="1">
    <citation type="journal article" date="2002" name="J. Bacteriol.">
        <title>Genome sequence and analysis of the oral bacterium Fusobacterium nucleatum strain ATCC 25586.</title>
        <authorList>
            <person name="Kapatral V."/>
            <person name="Anderson I."/>
            <person name="Ivanova N."/>
            <person name="Reznik G."/>
            <person name="Los T."/>
            <person name="Lykidis A."/>
            <person name="Bhattacharyya A."/>
            <person name="Bartman A."/>
            <person name="Gardner W."/>
            <person name="Grechkin G."/>
            <person name="Zhu L."/>
            <person name="Vasieva O."/>
            <person name="Chu L."/>
            <person name="Kogan Y."/>
            <person name="Chaga O."/>
            <person name="Goltsman E."/>
            <person name="Bernal A."/>
            <person name="Larsen N."/>
            <person name="D'Souza M."/>
            <person name="Walunas T."/>
            <person name="Pusch G."/>
            <person name="Haselkorn R."/>
            <person name="Fonstein M."/>
            <person name="Kyrpides N.C."/>
            <person name="Overbeek R."/>
        </authorList>
    </citation>
    <scope>NUCLEOTIDE SEQUENCE [LARGE SCALE GENOMIC DNA]</scope>
    <source>
        <strain>ATCC 25586 / DSM 15643 / BCRC 10681 / CIP 101130 / JCM 8532 / KCTC 2640 / LMG 13131 / VPI 4355</strain>
    </source>
</reference>
<proteinExistence type="inferred from homology"/>
<organism>
    <name type="scientific">Fusobacterium nucleatum subsp. nucleatum (strain ATCC 25586 / DSM 15643 / BCRC 10681 / CIP 101130 / JCM 8532 / KCTC 2640 / LMG 13131 / VPI 4355)</name>
    <dbReference type="NCBI Taxonomy" id="190304"/>
    <lineage>
        <taxon>Bacteria</taxon>
        <taxon>Fusobacteriati</taxon>
        <taxon>Fusobacteriota</taxon>
        <taxon>Fusobacteriia</taxon>
        <taxon>Fusobacteriales</taxon>
        <taxon>Fusobacteriaceae</taxon>
        <taxon>Fusobacterium</taxon>
    </lineage>
</organism>
<keyword id="KW-0520">NAD</keyword>
<keyword id="KW-1185">Reference proteome</keyword>
<keyword id="KW-0808">Transferase</keyword>
<sequence length="179" mass="20859">MDNDVKLGRFISLILRHKPETINLKLDKNGWANTKELIEKISKSGREIDFEILERIVNENNKKRYSFNEDKTKIRAVQGHSIEVNLELKEVVPPAILYHGTAFKTLESIKKEGIKKMSRQHVHLSADIETAKNVATRHSGKYIILEIDTEAMLKENYKFYLSENKVWLTDFVPSKFIKF</sequence>